<sequence length="219" mass="24821">MSGSSGPLSWPGPRPCALLFLLLLGPSSVLAISFHLPVNSRKCLREEIHKDLLVTGAYEITDQSGGAGGLRTHLKITDSAGHILYAKEDATKGKFAFTTEDYDMFEVCFESKGTGRIPDQLVILDMKHGVEAKNYEEIAKVEKLKPLEVELRRLEDLSESIVNDFAYMKKREEEMRDTNESTNTRVLYFSIFSMLCLIGLATWQVFYLRRFFKAKKLIE</sequence>
<evidence type="ECO:0000250" key="1"/>
<evidence type="ECO:0000250" key="2">
    <source>
        <dbReference type="UniProtKB" id="P49755"/>
    </source>
</evidence>
<evidence type="ECO:0000250" key="3">
    <source>
        <dbReference type="UniProtKB" id="Q28735"/>
    </source>
</evidence>
<evidence type="ECO:0000250" key="4">
    <source>
        <dbReference type="UniProtKB" id="Q63584"/>
    </source>
</evidence>
<evidence type="ECO:0000255" key="5"/>
<evidence type="ECO:0000255" key="6">
    <source>
        <dbReference type="PROSITE-ProRule" id="PRU00096"/>
    </source>
</evidence>
<evidence type="ECO:0000269" key="7">
    <source>
    </source>
</evidence>
<evidence type="ECO:0000269" key="8">
    <source>
    </source>
</evidence>
<evidence type="ECO:0000269" key="9">
    <source>
    </source>
</evidence>
<evidence type="ECO:0000305" key="10"/>
<reference key="1">
    <citation type="journal article" date="1997" name="J. Cell Biol.">
        <title>Involvement of the transmembrane protein p23 in biosynthetic protein transport.</title>
        <authorList>
            <person name="Rojo M."/>
            <person name="Pepperkok R."/>
            <person name="Emery G."/>
            <person name="Kellner R."/>
            <person name="Stang E."/>
            <person name="Parton R.G."/>
            <person name="Gruenberg J."/>
        </authorList>
    </citation>
    <scope>NUCLEOTIDE SEQUENCE [MRNA]</scope>
    <scope>FUNCTION</scope>
    <scope>SUBCELLULAR LOCATION</scope>
</reference>
<reference key="2">
    <citation type="journal article" date="1997" name="Electrophoresis">
        <title>Identification of components of trans-Golgi network-derived transport vesicles and detergent-insoluble complexes by nanoelectrospray tandem mass spectrometry.</title>
        <authorList>
            <person name="Shevchenko A."/>
            <person name="Keller P."/>
            <person name="Scheiffele P."/>
            <person name="Mann M."/>
            <person name="Simons K."/>
        </authorList>
    </citation>
    <scope>SUBCELLULAR LOCATION</scope>
</reference>
<reference key="3">
    <citation type="journal article" date="2010" name="J. Cell Sci.">
        <title>Selective export of human GPI-anchored proteins from the endoplasmic reticulum.</title>
        <authorList>
            <person name="Bonnon C."/>
            <person name="Wendeler M.W."/>
            <person name="Paccaud J.P."/>
            <person name="Hauri H.P."/>
        </authorList>
    </citation>
    <scope>INTERACTION WITH CD59; SEC24B; SEC24C AND SEC24D</scope>
</reference>
<gene>
    <name type="primary">TMED10</name>
    <name type="synonym">TMP21</name>
</gene>
<organism>
    <name type="scientific">Mesocricetus auratus</name>
    <name type="common">Golden hamster</name>
    <dbReference type="NCBI Taxonomy" id="10036"/>
    <lineage>
        <taxon>Eukaryota</taxon>
        <taxon>Metazoa</taxon>
        <taxon>Chordata</taxon>
        <taxon>Craniata</taxon>
        <taxon>Vertebrata</taxon>
        <taxon>Euteleostomi</taxon>
        <taxon>Mammalia</taxon>
        <taxon>Eutheria</taxon>
        <taxon>Euarchontoglires</taxon>
        <taxon>Glires</taxon>
        <taxon>Rodentia</taxon>
        <taxon>Myomorpha</taxon>
        <taxon>Muroidea</taxon>
        <taxon>Cricetidae</taxon>
        <taxon>Cricetinae</taxon>
        <taxon>Mesocricetus</taxon>
    </lineage>
</organism>
<comment type="function">
    <text evidence="2 3 4 8">Cargo receptor involved in protein vesicular trafficking and quality control in the endoplasmic reticulum (ER) and Golgi (PubMed:9382861). The p24 protein family is a group of transmembrane proteins that bind coat protein complex I/COPI and coat protein complex II/COPII involved in vesicular trafficking between the membranes. Acts at the lumenal side for incorporation of secretory cargo molecules into transport vesicles and involved in vesicle coat formation at the cytoplasmic side (By similarity). Mainly functions in the early secretory pathway and cycles between the ER, ER-Golgi intermediate compartment (ERGIC) and Golgi, mediating cargo transport through COPI and COPII-coated vesicles (PubMed:9382861). In COPII vesicle-mediated anterograde transport, involved in the transport of GPI-anchored proteins by acting together with TMED2 as their cargo receptor; the function specifically implies SEC24C and SEC24D of the COPII vesicle coat and lipid raft-like microdomains of the ER (By similarity). Recognizes GPI anchors structural remodeled in the ER by the GPI inositol-deacylase/PGAP1 and the metallophosphoesterase MPPE1/PGAP5 (By similarity). In COPI vesicle-mediated retrograde transport, involved in the biogenesis of COPI vesicles and vesicle coat recruitment. Involved in trafficking of amyloid beta A4 protein and soluble APP-beta release (independent from the modulation of gamma-secretase activity) (By similarity). Involved in the KDELR2-mediated retrograde transport of the toxin A subunit (CTX-A-K63)together with COPI and the COOH terminus of KDELR2 (By similarity). On Golgi membranes, acts as a primary receptor for ARF1-GDP, a GTP-binding protein involved in COPI-vesicle formation. Increases coatomer-dependent GTPase-activating activity of ARFGAP2 which mediates the hydrolysis of ARF1-bound GTP and therefore modulates protein trafficking from the Golgi apparatus. Involved in the exocytic trafficking of G protein-coupled receptors F2LR1/PAR2 (trypsin and tryspin-like enzyme receptor), OPRM1 (opioid receptor) and P2RY4 (UTD and UDP receptor) from the Golgi to the plasma membrane, thus contributing to receptor resensitization. In addition to its cargo receptor activity, may also act as a protein channel after oligomerization, facilitating the post-translational entry of leaderless cytoplasmic cargo into the ERGIC. Involved in the translocation into ERGIC, the vesicle entry and the secretion of leaderless cargos (lacking the secretion signal sequence), including the mature form of interleukin 1/IL-1 family members, the alpha-crystallin B chain HSPB5, the carbohydrate-binding proteins galectin-1/LGALS1 and galectin-3/LGALS3, the microtubule-associated protein Tau/MAPT, and the annexin A1/ANXA1; the translocation process is dependent on cargo protein unfolding and enhanced by chaperones HSP90AB1 and HSP90B1/GRP9. Could also associates with the presenilin-dependent gamma-secretase complex in order to regulate gamma-cleavages of the amyloid beta A4 protein to yield amyloid-beta 40/Abeta40 (By similarity).</text>
</comment>
<comment type="subunit">
    <text evidence="2 3 4 7">Predominantly dimeric and to a lesser extent monomeric in the ER. Monomer and dimer in ERGIC and cis-Golgi network. Forms homooligomer (via GOLD domain); the assembly is promoted by direct binding with leaderless cargos and may form a protein channel that facilitates cargo entry into the ERGIC. Forms heterooligomeric complexes with other members of the p24 family such as TMED2, TMED7 and TMED9. Interacts (via GOLD domain) with TMED2 (via GOLD domain); the complex is required for export of TMED10 from the ER to the cis-Golgi network; the complex is proposed to be involved in cis-Golgi network dynamics and / or biogenesis. Associates with the COPI vesicle coat subunits (coatomer) (By similarity). Tetramerization of the cytoplasmic domain at the Golgi membrane in vitro; the complex is proposed to interact with COPI coatomer and induce budding of the vesicles (By similarity). Interacts with COPG1; the interaction involves TMED10 homodimer. Interacts with ARF1 (GDP-bound); the interaction probably involves a TMED10 oligomer (By similarity). Interacts with SEC23A, SEC24B, SEC24C and SEC24D components of the coat protein complex II/COPII, indicative of an association of TMED10 with the COPII vesicle coat (PubMed:20427317). Interacts with CD59 (PubMed:20427317). Interacts with MPPE1/PGAP5; the complex might recruit and sort GPI-anchored proteins to the ER-exit site, or the interaction might lead to recycling of PGAP5 between the ER and the Golgi. Interacts with F2LR1/PAR2 (By similarity). Interacts with KDELR2/ERD2; the interaction is disrupted by KDELR2 ligand (By similarity). Found in a complex composed at least of SURF4, TMED2 and TMED10. Associates with the presenilin-dependent gamma-secretase complex. Interacts with STX17; the interaction is direct. Interacts with IL-1; the interaction is direct. Interacts with RAB21 (active GTP-bound form); the interaction is indirect and regulates TMED10 abundance and localization at the Golgi (By similarity).</text>
</comment>
<comment type="interaction">
    <interactant intactId="EBI-4405327">
        <id>O35587</id>
    </interactant>
    <interactant intactId="EBI-297972">
        <id>P13987</id>
        <label>CD59</label>
    </interactant>
    <organismsDiffer>true</organismsDiffer>
    <experiments>5</experiments>
</comment>
<comment type="interaction">
    <interactant intactId="EBI-4405327">
        <id>O35587</id>
    </interactant>
    <interactant intactId="EBI-998485">
        <id>Q15363</id>
        <label>TMED2</label>
    </interactant>
    <organismsDiffer>true</organismsDiffer>
    <experiments>2</experiments>
</comment>
<comment type="subcellular location">
    <subcellularLocation>
        <location evidence="2">Endoplasmic reticulum membrane</location>
        <topology evidence="5">Single-pass type I membrane protein</topology>
    </subcellularLocation>
    <subcellularLocation>
        <location evidence="2">Endoplasmic reticulum-Golgi intermediate compartment membrane</location>
        <topology evidence="5">Single-pass type I membrane protein</topology>
    </subcellularLocation>
    <subcellularLocation>
        <location evidence="8 9">Golgi apparatus membrane</location>
        <topology evidence="5">Single-pass type I membrane protein</topology>
    </subcellularLocation>
    <subcellularLocation>
        <location evidence="8">Golgi apparatus</location>
        <location evidence="8">cis-Golgi network membrane</location>
        <topology evidence="5">Single-pass type I membrane protein</topology>
    </subcellularLocation>
    <subcellularLocation>
        <location evidence="9">Golgi apparatus</location>
        <location evidence="9">trans-Golgi network membrane</location>
        <topology evidence="5">Single-pass type I membrane protein</topology>
    </subcellularLocation>
    <subcellularLocation>
        <location evidence="2">Cytoplasmic vesicle</location>
        <location evidence="2">Secretory vesicle membrane</location>
        <topology evidence="5">Single-pass type I membrane protein</topology>
    </subcellularLocation>
    <subcellularLocation>
        <location evidence="4">Cell membrane</location>
        <topology evidence="5">Single-pass type I membrane protein</topology>
    </subcellularLocation>
    <subcellularLocation>
        <location evidence="2">Melanosome</location>
    </subcellularLocation>
</comment>
<comment type="domain">
    <text evidence="2">The GOLD domain is required for proper p24 heterooligomeric complex formation and efficient transport of GPI-anchored proteins.</text>
</comment>
<comment type="domain">
    <text evidence="4">The lumenal domain mediates localization to the plasma membrane by partially overriding the ER retention by the cytoplasmic domain.</text>
</comment>
<comment type="miscellaneous">
    <text evidence="2">Ectopic expression of TMED10 alone does not result in its proper cis-Golgi network localization. Interaction of TMED10 with TMED2 is both necessary and sufficient for transport of the couple to the cis-Golgi network, and TMED3 and/or TMED9 contribute to facilitating the process.</text>
</comment>
<comment type="similarity">
    <text evidence="10">Belongs to the EMP24/GP25L family.</text>
</comment>
<accession>O35587</accession>
<dbReference type="EMBL" id="AJ001513">
    <property type="protein sequence ID" value="CAA04796.1"/>
    <property type="molecule type" value="mRNA"/>
</dbReference>
<dbReference type="RefSeq" id="NP_001268617.1">
    <property type="nucleotide sequence ID" value="NM_001281688.1"/>
</dbReference>
<dbReference type="SMR" id="O35587"/>
<dbReference type="IntAct" id="O35587">
    <property type="interactions" value="6"/>
</dbReference>
<dbReference type="STRING" id="10036.ENSMAUP00000019232"/>
<dbReference type="GlyCosmos" id="O35587">
    <property type="glycosylation" value="1 site, No reported glycans"/>
</dbReference>
<dbReference type="Ensembl" id="ENSMAUT00000023206">
    <property type="protein sequence ID" value="ENSMAUP00000019232"/>
    <property type="gene ID" value="ENSMAUG00000017571"/>
</dbReference>
<dbReference type="GeneID" id="101832157"/>
<dbReference type="KEGG" id="maua:101832157"/>
<dbReference type="CTD" id="10972"/>
<dbReference type="eggNOG" id="KOG1691">
    <property type="taxonomic scope" value="Eukaryota"/>
</dbReference>
<dbReference type="OrthoDB" id="759142at2759"/>
<dbReference type="Proteomes" id="UP000189706">
    <property type="component" value="Unplaced"/>
</dbReference>
<dbReference type="GO" id="GO:0030137">
    <property type="term" value="C:COPI-coated vesicle"/>
    <property type="evidence" value="ECO:0000250"/>
    <property type="project" value="UniProtKB"/>
</dbReference>
<dbReference type="GO" id="GO:0005789">
    <property type="term" value="C:endoplasmic reticulum membrane"/>
    <property type="evidence" value="ECO:0007669"/>
    <property type="project" value="UniProtKB-SubCell"/>
</dbReference>
<dbReference type="GO" id="GO:0005793">
    <property type="term" value="C:endoplasmic reticulum-Golgi intermediate compartment"/>
    <property type="evidence" value="ECO:0000250"/>
    <property type="project" value="UniProtKB"/>
</dbReference>
<dbReference type="GO" id="GO:0033116">
    <property type="term" value="C:endoplasmic reticulum-Golgi intermediate compartment membrane"/>
    <property type="evidence" value="ECO:0007669"/>
    <property type="project" value="UniProtKB-SubCell"/>
</dbReference>
<dbReference type="GO" id="GO:0070765">
    <property type="term" value="C:gamma-secretase complex"/>
    <property type="evidence" value="ECO:0000250"/>
    <property type="project" value="UniProtKB"/>
</dbReference>
<dbReference type="GO" id="GO:0000139">
    <property type="term" value="C:Golgi membrane"/>
    <property type="evidence" value="ECO:0007669"/>
    <property type="project" value="UniProtKB-SubCell"/>
</dbReference>
<dbReference type="GO" id="GO:0042470">
    <property type="term" value="C:melanosome"/>
    <property type="evidence" value="ECO:0007669"/>
    <property type="project" value="UniProtKB-SubCell"/>
</dbReference>
<dbReference type="GO" id="GO:0005886">
    <property type="term" value="C:plasma membrane"/>
    <property type="evidence" value="ECO:0000250"/>
    <property type="project" value="UniProtKB"/>
</dbReference>
<dbReference type="GO" id="GO:0030140">
    <property type="term" value="C:trans-Golgi network transport vesicle"/>
    <property type="evidence" value="ECO:0000314"/>
    <property type="project" value="UniProtKB"/>
</dbReference>
<dbReference type="GO" id="GO:0030658">
    <property type="term" value="C:transport vesicle membrane"/>
    <property type="evidence" value="ECO:0007669"/>
    <property type="project" value="UniProtKB-SubCell"/>
</dbReference>
<dbReference type="GO" id="GO:0042589">
    <property type="term" value="C:zymogen granule membrane"/>
    <property type="evidence" value="ECO:0007669"/>
    <property type="project" value="Ensembl"/>
</dbReference>
<dbReference type="GO" id="GO:0008320">
    <property type="term" value="F:protein transmembrane transporter activity"/>
    <property type="evidence" value="ECO:0000250"/>
    <property type="project" value="UniProtKB"/>
</dbReference>
<dbReference type="GO" id="GO:0019905">
    <property type="term" value="F:syntaxin binding"/>
    <property type="evidence" value="ECO:0007669"/>
    <property type="project" value="Ensembl"/>
</dbReference>
<dbReference type="GO" id="GO:0035964">
    <property type="term" value="P:COPI-coated vesicle budding"/>
    <property type="evidence" value="ECO:0000250"/>
    <property type="project" value="UniProtKB"/>
</dbReference>
<dbReference type="GO" id="GO:0106273">
    <property type="term" value="P:cytosol to ERGIC protein transport"/>
    <property type="evidence" value="ECO:0000250"/>
    <property type="project" value="UniProtKB"/>
</dbReference>
<dbReference type="GO" id="GO:0007030">
    <property type="term" value="P:Golgi organization"/>
    <property type="evidence" value="ECO:0007669"/>
    <property type="project" value="Ensembl"/>
</dbReference>
<dbReference type="GO" id="GO:0006886">
    <property type="term" value="P:intracellular protein transport"/>
    <property type="evidence" value="ECO:0007669"/>
    <property type="project" value="Ensembl"/>
</dbReference>
<dbReference type="GO" id="GO:0032732">
    <property type="term" value="P:positive regulation of interleukin-1 production"/>
    <property type="evidence" value="ECO:0000250"/>
    <property type="project" value="UniProtKB"/>
</dbReference>
<dbReference type="GO" id="GO:0050714">
    <property type="term" value="P:positive regulation of protein secretion"/>
    <property type="evidence" value="ECO:0000250"/>
    <property type="project" value="UniProtKB"/>
</dbReference>
<dbReference type="GO" id="GO:0106272">
    <property type="term" value="P:protein localization to ERGIC"/>
    <property type="evidence" value="ECO:0000250"/>
    <property type="project" value="UniProtKB"/>
</dbReference>
<dbReference type="GO" id="GO:0045055">
    <property type="term" value="P:regulated exocytosis"/>
    <property type="evidence" value="ECO:0007669"/>
    <property type="project" value="Ensembl"/>
</dbReference>
<dbReference type="GO" id="GO:1902003">
    <property type="term" value="P:regulation of amyloid-beta formation"/>
    <property type="evidence" value="ECO:0000250"/>
    <property type="project" value="UniProtKB"/>
</dbReference>
<dbReference type="GO" id="GO:0006890">
    <property type="term" value="P:retrograde vesicle-mediated transport, Golgi to endoplasmic reticulum"/>
    <property type="evidence" value="ECO:0000250"/>
    <property type="project" value="UniProtKB"/>
</dbReference>
<dbReference type="InterPro" id="IPR015720">
    <property type="entry name" value="Emp24-like"/>
</dbReference>
<dbReference type="InterPro" id="IPR009038">
    <property type="entry name" value="GOLD_dom"/>
</dbReference>
<dbReference type="PANTHER" id="PTHR22811">
    <property type="entry name" value="TRANSMEMBRANE EMP24 DOMAIN-CONTAINING PROTEIN"/>
    <property type="match status" value="1"/>
</dbReference>
<dbReference type="Pfam" id="PF01105">
    <property type="entry name" value="EMP24_GP25L"/>
    <property type="match status" value="1"/>
</dbReference>
<dbReference type="SMART" id="SM01190">
    <property type="entry name" value="EMP24_GP25L"/>
    <property type="match status" value="1"/>
</dbReference>
<dbReference type="PROSITE" id="PS50866">
    <property type="entry name" value="GOLD"/>
    <property type="match status" value="1"/>
</dbReference>
<protein>
    <recommendedName>
        <fullName>Transmembrane emp24 domain-containing protein 10</fullName>
        <shortName>Protein TMED10</shortName>
    </recommendedName>
    <alternativeName>
        <fullName>21 kDa transmembrane-trafficking protein</fullName>
    </alternativeName>
    <alternativeName>
        <fullName>Integral membrane protein p23</fullName>
    </alternativeName>
    <alternativeName>
        <fullName>Transmembrane protein Tmp21</fullName>
    </alternativeName>
    <alternativeName>
        <fullName>p24 family protein delta-1</fullName>
        <shortName>p24delta1</shortName>
    </alternativeName>
</protein>
<keyword id="KW-1003">Cell membrane</keyword>
<keyword id="KW-0968">Cytoplasmic vesicle</keyword>
<keyword id="KW-0256">Endoplasmic reticulum</keyword>
<keyword id="KW-0931">ER-Golgi transport</keyword>
<keyword id="KW-0325">Glycoprotein</keyword>
<keyword id="KW-0333">Golgi apparatus</keyword>
<keyword id="KW-0472">Membrane</keyword>
<keyword id="KW-0488">Methylation</keyword>
<keyword id="KW-0653">Protein transport</keyword>
<keyword id="KW-1185">Reference proteome</keyword>
<keyword id="KW-0732">Signal</keyword>
<keyword id="KW-0812">Transmembrane</keyword>
<keyword id="KW-1133">Transmembrane helix</keyword>
<keyword id="KW-0813">Transport</keyword>
<proteinExistence type="evidence at protein level"/>
<feature type="signal peptide" evidence="1">
    <location>
        <begin position="1"/>
        <end position="31"/>
    </location>
</feature>
<feature type="chain" id="PRO_0000010400" description="Transmembrane emp24 domain-containing protein 10">
    <location>
        <begin position="32"/>
        <end position="219"/>
    </location>
</feature>
<feature type="topological domain" description="Lumenal" evidence="10">
    <location>
        <begin position="32"/>
        <end position="185"/>
    </location>
</feature>
<feature type="transmembrane region" description="Helical" evidence="5">
    <location>
        <begin position="186"/>
        <end position="206"/>
    </location>
</feature>
<feature type="topological domain" description="Cytoplasmic" evidence="10">
    <location>
        <begin position="207"/>
        <end position="219"/>
    </location>
</feature>
<feature type="domain" description="GOLD" evidence="6">
    <location>
        <begin position="41"/>
        <end position="193"/>
    </location>
</feature>
<feature type="region of interest" description="Required for interaction with STX17" evidence="1">
    <location>
        <begin position="1"/>
        <end position="142"/>
    </location>
</feature>
<feature type="region of interest" description="Required for TMED10 and TMED2 cis-Golgi network localization" evidence="1">
    <location>
        <begin position="147"/>
        <end position="178"/>
    </location>
</feature>
<feature type="region of interest" description="Interaction with COPG1" evidence="1">
    <location>
        <begin position="204"/>
        <end position="219"/>
    </location>
</feature>
<feature type="region of interest" description="Interaction with ARF1 and IL1B" evidence="2">
    <location>
        <begin position="207"/>
        <end position="219"/>
    </location>
</feature>
<feature type="short sequence motif" description="COPI vesicle coat-binding" evidence="5">
    <location>
        <begin position="211"/>
        <end position="219"/>
    </location>
</feature>
<feature type="short sequence motif" description="COPII vesicle coat-binding" evidence="5">
    <location>
        <begin position="211"/>
        <end position="212"/>
    </location>
</feature>
<feature type="modified residue" description="Dimethylated arginine" evidence="4">
    <location>
        <position position="171"/>
    </location>
</feature>
<feature type="modified residue" description="Dimethylated arginine" evidence="4">
    <location>
        <position position="176"/>
    </location>
</feature>
<feature type="glycosylation site" description="N-linked (GlcNAc...) asparagine" evidence="5">
    <location>
        <position position="179"/>
    </location>
</feature>
<name>TMEDA_MESAU</name>